<accession>Q9LVJ7</accession>
<accession>C0SVB0</accession>
<feature type="chain" id="PRO_0000198776" description="Nuclear transcription factor Y subunit A-6">
    <location>
        <begin position="1"/>
        <end position="308"/>
    </location>
</feature>
<feature type="DNA-binding region" description="NFYA/HAP2-type" evidence="2">
    <location>
        <begin position="204"/>
        <end position="229"/>
    </location>
</feature>
<feature type="region of interest" description="Disordered" evidence="3">
    <location>
        <begin position="53"/>
        <end position="76"/>
    </location>
</feature>
<feature type="short sequence motif" description="Subunit association domain (SAD)">
    <location>
        <begin position="174"/>
        <end position="197"/>
    </location>
</feature>
<feature type="turn" evidence="6">
    <location>
        <begin position="177"/>
        <end position="179"/>
    </location>
</feature>
<feature type="helix" evidence="6">
    <location>
        <begin position="180"/>
        <end position="195"/>
    </location>
</feature>
<feature type="helix" evidence="6">
    <location>
        <begin position="209"/>
        <end position="215"/>
    </location>
</feature>
<sequence length="308" mass="34433">MQEFHSSKDSLPCPATSWDNSVFTNSNVQGSSSLTDNNTLSLTMEMKQTGFQMQHYDSSSTQSTGGESYSEVASLSEPTNRYGHNIVVTHLSGYKENPENPIGSHSISKVSQDSVVLPIEAASWPLHGNVTPHFNGFLSFPYASQHTVQHPQIRGLVPSRMPLPHNIPENEPIFVNAKQYQAILRRRERRAKLEAQNKLIKVRKPYLHESRHLHALKRVRGSGGRFLNTKKHQESNSSLSPPFLIPPHVFKNSPGKFRQMDISRGGVVSSVSTTSCSDITGNNNDMFQQNPQFRFSGYPSNHHVSVLM</sequence>
<organism>
    <name type="scientific">Arabidopsis thaliana</name>
    <name type="common">Mouse-ear cress</name>
    <dbReference type="NCBI Taxonomy" id="3702"/>
    <lineage>
        <taxon>Eukaryota</taxon>
        <taxon>Viridiplantae</taxon>
        <taxon>Streptophyta</taxon>
        <taxon>Embryophyta</taxon>
        <taxon>Tracheophyta</taxon>
        <taxon>Spermatophyta</taxon>
        <taxon>Magnoliopsida</taxon>
        <taxon>eudicotyledons</taxon>
        <taxon>Gunneridae</taxon>
        <taxon>Pentapetalae</taxon>
        <taxon>rosids</taxon>
        <taxon>malvids</taxon>
        <taxon>Brassicales</taxon>
        <taxon>Brassicaceae</taxon>
        <taxon>Camelineae</taxon>
        <taxon>Arabidopsis</taxon>
    </lineage>
</organism>
<reference key="1">
    <citation type="journal article" date="2000" name="DNA Res.">
        <title>Structural analysis of Arabidopsis thaliana chromosome 3. I. Sequence features of the regions of 4,504,864 bp covered by sixty P1 and TAC clones.</title>
        <authorList>
            <person name="Sato S."/>
            <person name="Nakamura Y."/>
            <person name="Kaneko T."/>
            <person name="Katoh T."/>
            <person name="Asamizu E."/>
            <person name="Tabata S."/>
        </authorList>
    </citation>
    <scope>NUCLEOTIDE SEQUENCE [LARGE SCALE GENOMIC DNA]</scope>
    <source>
        <strain>cv. Columbia</strain>
    </source>
</reference>
<reference key="2">
    <citation type="journal article" date="2017" name="Plant J.">
        <title>Araport11: a complete reannotation of the Arabidopsis thaliana reference genome.</title>
        <authorList>
            <person name="Cheng C.Y."/>
            <person name="Krishnakumar V."/>
            <person name="Chan A.P."/>
            <person name="Thibaud-Nissen F."/>
            <person name="Schobel S."/>
            <person name="Town C.D."/>
        </authorList>
    </citation>
    <scope>GENOME REANNOTATION</scope>
    <source>
        <strain>cv. Columbia</strain>
    </source>
</reference>
<reference key="3">
    <citation type="submission" date="2009-03" db="EMBL/GenBank/DDBJ databases">
        <title>ORF cloning and analysis of Arabidopsis transcription factor genes.</title>
        <authorList>
            <person name="Fujita M."/>
            <person name="Mizukado S."/>
            <person name="Seki M."/>
            <person name="Shinozaki K."/>
            <person name="Mitsuda N."/>
            <person name="Takiguchi Y."/>
            <person name="Takagi M."/>
        </authorList>
    </citation>
    <scope>NUCLEOTIDE SEQUENCE [LARGE SCALE MRNA]</scope>
</reference>
<reference key="4">
    <citation type="journal article" date="2001" name="Gene">
        <title>Regulation of the CCAAT-binding NF-Y subunits in Arabidopsis thaliana.</title>
        <authorList>
            <person name="Gusmaroli G."/>
            <person name="Tonelli C."/>
            <person name="Mantovani R."/>
        </authorList>
    </citation>
    <scope>TISSUE SPECIFICITY</scope>
</reference>
<reference key="5">
    <citation type="journal article" date="2002" name="Gene">
        <title>Regulation of novel members of the Arabidopsis thaliana CCAAT-binding nuclear factor Y subunits.</title>
        <authorList>
            <person name="Gusmaroli G."/>
            <person name="Tonelli C."/>
            <person name="Mantovani R."/>
        </authorList>
    </citation>
    <scope>GENE FAMILY</scope>
    <scope>NOMENCLATURE</scope>
</reference>
<dbReference type="EMBL" id="AB019229">
    <property type="protein sequence ID" value="BAB02333.1"/>
    <property type="molecule type" value="Genomic_DNA"/>
</dbReference>
<dbReference type="EMBL" id="CP002686">
    <property type="protein sequence ID" value="AEE75456.1"/>
    <property type="molecule type" value="Genomic_DNA"/>
</dbReference>
<dbReference type="EMBL" id="CP002686">
    <property type="protein sequence ID" value="ANM65529.1"/>
    <property type="molecule type" value="Genomic_DNA"/>
</dbReference>
<dbReference type="EMBL" id="AB493613">
    <property type="protein sequence ID" value="BAH30451.1"/>
    <property type="molecule type" value="mRNA"/>
</dbReference>
<dbReference type="PDB" id="6R2V">
    <property type="method" value="X-ray"/>
    <property type="resolution" value="2.50 A"/>
    <property type="chains" value="A=170-241"/>
</dbReference>
<dbReference type="PDBsum" id="6R2V"/>
<dbReference type="SMR" id="Q9LVJ7"/>
<dbReference type="BioGRID" id="5950">
    <property type="interactions" value="23"/>
</dbReference>
<dbReference type="FunCoup" id="Q9LVJ7">
    <property type="interactions" value="4"/>
</dbReference>
<dbReference type="IntAct" id="Q9LVJ7">
    <property type="interactions" value="21"/>
</dbReference>
<dbReference type="STRING" id="3702.Q9LVJ7"/>
<dbReference type="PaxDb" id="3702-AT3G14020.1"/>
<dbReference type="EnsemblPlants" id="AT3G14020.1">
    <property type="protein sequence ID" value="AT3G14020.1"/>
    <property type="gene ID" value="AT3G14020"/>
</dbReference>
<dbReference type="EnsemblPlants" id="AT3G14020.2">
    <property type="protein sequence ID" value="AT3G14020.2"/>
    <property type="gene ID" value="AT3G14020"/>
</dbReference>
<dbReference type="Gramene" id="AT3G14020.1">
    <property type="protein sequence ID" value="AT3G14020.1"/>
    <property type="gene ID" value="AT3G14020"/>
</dbReference>
<dbReference type="Gramene" id="AT3G14020.2">
    <property type="protein sequence ID" value="AT3G14020.2"/>
    <property type="gene ID" value="AT3G14020"/>
</dbReference>
<dbReference type="KEGG" id="ath:AT3G14020"/>
<dbReference type="Araport" id="AT3G14020"/>
<dbReference type="TAIR" id="AT3G14020">
    <property type="gene designation" value="NF-YA6"/>
</dbReference>
<dbReference type="eggNOG" id="KOG1561">
    <property type="taxonomic scope" value="Eukaryota"/>
</dbReference>
<dbReference type="HOGENOM" id="CLU_058712_2_0_1"/>
<dbReference type="InParanoid" id="Q9LVJ7"/>
<dbReference type="OMA" id="MPLPHNI"/>
<dbReference type="OrthoDB" id="1097733at2759"/>
<dbReference type="PhylomeDB" id="Q9LVJ7"/>
<dbReference type="PRO" id="PR:Q9LVJ7"/>
<dbReference type="Proteomes" id="UP000006548">
    <property type="component" value="Chromosome 3"/>
</dbReference>
<dbReference type="ExpressionAtlas" id="Q9LVJ7">
    <property type="expression patterns" value="baseline and differential"/>
</dbReference>
<dbReference type="GO" id="GO:0016602">
    <property type="term" value="C:CCAAT-binding factor complex"/>
    <property type="evidence" value="ECO:0007669"/>
    <property type="project" value="InterPro"/>
</dbReference>
<dbReference type="GO" id="GO:0003677">
    <property type="term" value="F:DNA binding"/>
    <property type="evidence" value="ECO:0007669"/>
    <property type="project" value="UniProtKB-KW"/>
</dbReference>
<dbReference type="GO" id="GO:0003700">
    <property type="term" value="F:DNA-binding transcription factor activity"/>
    <property type="evidence" value="ECO:0000250"/>
    <property type="project" value="TAIR"/>
</dbReference>
<dbReference type="GO" id="GO:0009793">
    <property type="term" value="P:embryo development ending in seed dormancy"/>
    <property type="evidence" value="ECO:0000315"/>
    <property type="project" value="TAIR"/>
</dbReference>
<dbReference type="GO" id="GO:0048316">
    <property type="term" value="P:seed development"/>
    <property type="evidence" value="ECO:0000315"/>
    <property type="project" value="TAIR"/>
</dbReference>
<dbReference type="GO" id="GO:0010262">
    <property type="term" value="P:somatic embryogenesis"/>
    <property type="evidence" value="ECO:0000315"/>
    <property type="project" value="TAIR"/>
</dbReference>
<dbReference type="Gene3D" id="6.10.250.2430">
    <property type="match status" value="1"/>
</dbReference>
<dbReference type="InterPro" id="IPR018362">
    <property type="entry name" value="CCAAT-binding_factor_CS"/>
</dbReference>
<dbReference type="InterPro" id="IPR001289">
    <property type="entry name" value="NFYA"/>
</dbReference>
<dbReference type="PANTHER" id="PTHR12632">
    <property type="entry name" value="TRANSCRIPTION FACTOR NF-Y ALPHA-RELATED"/>
    <property type="match status" value="1"/>
</dbReference>
<dbReference type="Pfam" id="PF02045">
    <property type="entry name" value="CBFB_NFYA"/>
    <property type="match status" value="1"/>
</dbReference>
<dbReference type="PRINTS" id="PR00616">
    <property type="entry name" value="CCAATSUBUNTB"/>
</dbReference>
<dbReference type="SMART" id="SM00521">
    <property type="entry name" value="CBF"/>
    <property type="match status" value="1"/>
</dbReference>
<dbReference type="PROSITE" id="PS00686">
    <property type="entry name" value="NFYA_HAP2_1"/>
    <property type="match status" value="1"/>
</dbReference>
<dbReference type="PROSITE" id="PS51152">
    <property type="entry name" value="NFYA_HAP2_2"/>
    <property type="match status" value="1"/>
</dbReference>
<proteinExistence type="evidence at protein level"/>
<comment type="function">
    <text evidence="1">Stimulates the transcription of various genes by recognizing and binding to a CCAAT motif in promoters.</text>
</comment>
<comment type="subunit">
    <text evidence="1">Heterotrimeric transcription factor composed of three components, NF-YA, NF-YB and NF-YC. NF-YB and NF-YC must interact and dimerize for NF-YA association and DNA binding (By similarity).</text>
</comment>
<comment type="interaction">
    <interactant intactId="EBI-15195195">
        <id>Q9LVJ7</id>
    </interactant>
    <interactant intactId="EBI-2466050">
        <id>Q8L4B2</id>
        <label>NFYC9</label>
    </interactant>
    <organismsDiffer>false</organismsDiffer>
    <experiments>3</experiments>
</comment>
<comment type="subcellular location">
    <subcellularLocation>
        <location evidence="5">Nucleus</location>
    </subcellularLocation>
</comment>
<comment type="tissue specificity">
    <text evidence="4">Expressed in flowers and siliques.</text>
</comment>
<comment type="similarity">
    <text evidence="2">Belongs to the NFYA/HAP2 subunit family.</text>
</comment>
<evidence type="ECO:0000250" key="1"/>
<evidence type="ECO:0000255" key="2">
    <source>
        <dbReference type="PROSITE-ProRule" id="PRU00966"/>
    </source>
</evidence>
<evidence type="ECO:0000256" key="3">
    <source>
        <dbReference type="SAM" id="MobiDB-lite"/>
    </source>
</evidence>
<evidence type="ECO:0000269" key="4">
    <source>
    </source>
</evidence>
<evidence type="ECO:0000305" key="5"/>
<evidence type="ECO:0007829" key="6">
    <source>
        <dbReference type="PDB" id="6R2V"/>
    </source>
</evidence>
<keyword id="KW-0002">3D-structure</keyword>
<keyword id="KW-0010">Activator</keyword>
<keyword id="KW-0238">DNA-binding</keyword>
<keyword id="KW-0539">Nucleus</keyword>
<keyword id="KW-1185">Reference proteome</keyword>
<keyword id="KW-0804">Transcription</keyword>
<keyword id="KW-0805">Transcription regulation</keyword>
<name>NFYA6_ARATH</name>
<gene>
    <name type="primary">NFYA6</name>
    <name type="ordered locus">At3g14020</name>
    <name type="ORF">MDC16.15</name>
</gene>
<protein>
    <recommendedName>
        <fullName>Nuclear transcription factor Y subunit A-6</fullName>
        <shortName>AtNF-YA-6</shortName>
    </recommendedName>
</protein>